<feature type="chain" id="PRO_0000439797" description="ATPase family AAA domain-containing protein 3A homolog">
    <location>
        <begin position="1"/>
        <end position="604"/>
    </location>
</feature>
<feature type="region of interest" description="Disordered" evidence="3">
    <location>
        <begin position="1"/>
        <end position="50"/>
    </location>
</feature>
<feature type="coiled-coil region" evidence="2">
    <location>
        <begin position="62"/>
        <end position="221"/>
    </location>
</feature>
<feature type="compositionally biased region" description="Polar residues" evidence="3">
    <location>
        <begin position="8"/>
        <end position="19"/>
    </location>
</feature>
<feature type="compositionally biased region" description="Basic and acidic residues" evidence="3">
    <location>
        <begin position="29"/>
        <end position="50"/>
    </location>
</feature>
<feature type="binding site" evidence="2">
    <location>
        <begin position="358"/>
        <end position="365"/>
    </location>
    <ligand>
        <name>ATP</name>
        <dbReference type="ChEBI" id="CHEBI:30616"/>
    </ligand>
</feature>
<feature type="mutagenesis site" description="Decreases the number of mitochondria in motor neurons or in body wall muscles." evidence="4">
    <original>R</original>
    <variation>W</variation>
    <location>
        <position position="534"/>
    </location>
</feature>
<reference key="1">
    <citation type="journal article" date="2000" name="Science">
        <title>The genome sequence of Drosophila melanogaster.</title>
        <authorList>
            <person name="Adams M.D."/>
            <person name="Celniker S.E."/>
            <person name="Holt R.A."/>
            <person name="Evans C.A."/>
            <person name="Gocayne J.D."/>
            <person name="Amanatides P.G."/>
            <person name="Scherer S.E."/>
            <person name="Li P.W."/>
            <person name="Hoskins R.A."/>
            <person name="Galle R.F."/>
            <person name="George R.A."/>
            <person name="Lewis S.E."/>
            <person name="Richards S."/>
            <person name="Ashburner M."/>
            <person name="Henderson S.N."/>
            <person name="Sutton G.G."/>
            <person name="Wortman J.R."/>
            <person name="Yandell M.D."/>
            <person name="Zhang Q."/>
            <person name="Chen L.X."/>
            <person name="Brandon R.C."/>
            <person name="Rogers Y.-H.C."/>
            <person name="Blazej R.G."/>
            <person name="Champe M."/>
            <person name="Pfeiffer B.D."/>
            <person name="Wan K.H."/>
            <person name="Doyle C."/>
            <person name="Baxter E.G."/>
            <person name="Helt G."/>
            <person name="Nelson C.R."/>
            <person name="Miklos G.L.G."/>
            <person name="Abril J.F."/>
            <person name="Agbayani A."/>
            <person name="An H.-J."/>
            <person name="Andrews-Pfannkoch C."/>
            <person name="Baldwin D."/>
            <person name="Ballew R.M."/>
            <person name="Basu A."/>
            <person name="Baxendale J."/>
            <person name="Bayraktaroglu L."/>
            <person name="Beasley E.M."/>
            <person name="Beeson K.Y."/>
            <person name="Benos P.V."/>
            <person name="Berman B.P."/>
            <person name="Bhandari D."/>
            <person name="Bolshakov S."/>
            <person name="Borkova D."/>
            <person name="Botchan M.R."/>
            <person name="Bouck J."/>
            <person name="Brokstein P."/>
            <person name="Brottier P."/>
            <person name="Burtis K.C."/>
            <person name="Busam D.A."/>
            <person name="Butler H."/>
            <person name="Cadieu E."/>
            <person name="Center A."/>
            <person name="Chandra I."/>
            <person name="Cherry J.M."/>
            <person name="Cawley S."/>
            <person name="Dahlke C."/>
            <person name="Davenport L.B."/>
            <person name="Davies P."/>
            <person name="de Pablos B."/>
            <person name="Delcher A."/>
            <person name="Deng Z."/>
            <person name="Mays A.D."/>
            <person name="Dew I."/>
            <person name="Dietz S.M."/>
            <person name="Dodson K."/>
            <person name="Doup L.E."/>
            <person name="Downes M."/>
            <person name="Dugan-Rocha S."/>
            <person name="Dunkov B.C."/>
            <person name="Dunn P."/>
            <person name="Durbin K.J."/>
            <person name="Evangelista C.C."/>
            <person name="Ferraz C."/>
            <person name="Ferriera S."/>
            <person name="Fleischmann W."/>
            <person name="Fosler C."/>
            <person name="Gabrielian A.E."/>
            <person name="Garg N.S."/>
            <person name="Gelbart W.M."/>
            <person name="Glasser K."/>
            <person name="Glodek A."/>
            <person name="Gong F."/>
            <person name="Gorrell J.H."/>
            <person name="Gu Z."/>
            <person name="Guan P."/>
            <person name="Harris M."/>
            <person name="Harris N.L."/>
            <person name="Harvey D.A."/>
            <person name="Heiman T.J."/>
            <person name="Hernandez J.R."/>
            <person name="Houck J."/>
            <person name="Hostin D."/>
            <person name="Houston K.A."/>
            <person name="Howland T.J."/>
            <person name="Wei M.-H."/>
            <person name="Ibegwam C."/>
            <person name="Jalali M."/>
            <person name="Kalush F."/>
            <person name="Karpen G.H."/>
            <person name="Ke Z."/>
            <person name="Kennison J.A."/>
            <person name="Ketchum K.A."/>
            <person name="Kimmel B.E."/>
            <person name="Kodira C.D."/>
            <person name="Kraft C.L."/>
            <person name="Kravitz S."/>
            <person name="Kulp D."/>
            <person name="Lai Z."/>
            <person name="Lasko P."/>
            <person name="Lei Y."/>
            <person name="Levitsky A.A."/>
            <person name="Li J.H."/>
            <person name="Li Z."/>
            <person name="Liang Y."/>
            <person name="Lin X."/>
            <person name="Liu X."/>
            <person name="Mattei B."/>
            <person name="McIntosh T.C."/>
            <person name="McLeod M.P."/>
            <person name="McPherson D."/>
            <person name="Merkulov G."/>
            <person name="Milshina N.V."/>
            <person name="Mobarry C."/>
            <person name="Morris J."/>
            <person name="Moshrefi A."/>
            <person name="Mount S.M."/>
            <person name="Moy M."/>
            <person name="Murphy B."/>
            <person name="Murphy L."/>
            <person name="Muzny D.M."/>
            <person name="Nelson D.L."/>
            <person name="Nelson D.R."/>
            <person name="Nelson K.A."/>
            <person name="Nixon K."/>
            <person name="Nusskern D.R."/>
            <person name="Pacleb J.M."/>
            <person name="Palazzolo M."/>
            <person name="Pittman G.S."/>
            <person name="Pan S."/>
            <person name="Pollard J."/>
            <person name="Puri V."/>
            <person name="Reese M.G."/>
            <person name="Reinert K."/>
            <person name="Remington K."/>
            <person name="Saunders R.D.C."/>
            <person name="Scheeler F."/>
            <person name="Shen H."/>
            <person name="Shue B.C."/>
            <person name="Siden-Kiamos I."/>
            <person name="Simpson M."/>
            <person name="Skupski M.P."/>
            <person name="Smith T.J."/>
            <person name="Spier E."/>
            <person name="Spradling A.C."/>
            <person name="Stapleton M."/>
            <person name="Strong R."/>
            <person name="Sun E."/>
            <person name="Svirskas R."/>
            <person name="Tector C."/>
            <person name="Turner R."/>
            <person name="Venter E."/>
            <person name="Wang A.H."/>
            <person name="Wang X."/>
            <person name="Wang Z.-Y."/>
            <person name="Wassarman D.A."/>
            <person name="Weinstock G.M."/>
            <person name="Weissenbach J."/>
            <person name="Williams S.M."/>
            <person name="Woodage T."/>
            <person name="Worley K.C."/>
            <person name="Wu D."/>
            <person name="Yang S."/>
            <person name="Yao Q.A."/>
            <person name="Ye J."/>
            <person name="Yeh R.-F."/>
            <person name="Zaveri J.S."/>
            <person name="Zhan M."/>
            <person name="Zhang G."/>
            <person name="Zhao Q."/>
            <person name="Zheng L."/>
            <person name="Zheng X.H."/>
            <person name="Zhong F.N."/>
            <person name="Zhong W."/>
            <person name="Zhou X."/>
            <person name="Zhu S.C."/>
            <person name="Zhu X."/>
            <person name="Smith H.O."/>
            <person name="Gibbs R.A."/>
            <person name="Myers E.W."/>
            <person name="Rubin G.M."/>
            <person name="Venter J.C."/>
        </authorList>
    </citation>
    <scope>NUCLEOTIDE SEQUENCE [LARGE SCALE GENOMIC DNA]</scope>
    <source>
        <strain>Berkeley</strain>
    </source>
</reference>
<reference key="2">
    <citation type="journal article" date="2002" name="Genome Biol.">
        <title>Annotation of the Drosophila melanogaster euchromatic genome: a systematic review.</title>
        <authorList>
            <person name="Misra S."/>
            <person name="Crosby M.A."/>
            <person name="Mungall C.J."/>
            <person name="Matthews B.B."/>
            <person name="Campbell K.S."/>
            <person name="Hradecky P."/>
            <person name="Huang Y."/>
            <person name="Kaminker J.S."/>
            <person name="Millburn G.H."/>
            <person name="Prochnik S.E."/>
            <person name="Smith C.D."/>
            <person name="Tupy J.L."/>
            <person name="Whitfield E.J."/>
            <person name="Bayraktaroglu L."/>
            <person name="Berman B.P."/>
            <person name="Bettencourt B.R."/>
            <person name="Celniker S.E."/>
            <person name="de Grey A.D.N.J."/>
            <person name="Drysdale R.A."/>
            <person name="Harris N.L."/>
            <person name="Richter J."/>
            <person name="Russo S."/>
            <person name="Schroeder A.J."/>
            <person name="Shu S.Q."/>
            <person name="Stapleton M."/>
            <person name="Yamada C."/>
            <person name="Ashburner M."/>
            <person name="Gelbart W.M."/>
            <person name="Rubin G.M."/>
            <person name="Lewis S.E."/>
        </authorList>
    </citation>
    <scope>GENOME REANNOTATION</scope>
    <source>
        <strain>Berkeley</strain>
    </source>
</reference>
<reference key="3">
    <citation type="submission" date="2000-01" db="EMBL/GenBank/DDBJ databases">
        <title>The Drosophila belphegor (bor) gene encodes a novel member of the AAA family.</title>
        <authorList>
            <person name="Calgaro S.T."/>
            <person name="Boube M."/>
            <person name="Cribbs D.L."/>
            <person name="Bourbon H.M."/>
        </authorList>
    </citation>
    <scope>NUCLEOTIDE SEQUENCE [GENOMIC DNA / MRNA]</scope>
</reference>
<reference key="4">
    <citation type="journal article" date="2016" name="Am. J. Hum. Genet.">
        <title>Recurrent de novo and biallelic variation of ATAD3A, encoding a mitochondrial membrane protein, Results in distinct neurological syndromes.</title>
        <authorList>
            <consortium name="Baylor-Hopkins Center for Mendelian Genomics"/>
            <consortium name="University of Washington Center for Mendelian Genomics"/>
            <person name="Harel T."/>
            <person name="Yoon W.H."/>
            <person name="Garone C."/>
            <person name="Gu S."/>
            <person name="Coban-Akdemir Z."/>
            <person name="Eldomery M.K."/>
            <person name="Posey J.E."/>
            <person name="Jhangiani S.N."/>
            <person name="Rosenfeld J.A."/>
            <person name="Cho M.T."/>
            <person name="Fox S."/>
            <person name="Withers M."/>
            <person name="Brooks S.M."/>
            <person name="Chiang T."/>
            <person name="Duraine L."/>
            <person name="Erdin S."/>
            <person name="Yuan B."/>
            <person name="Shao Y."/>
            <person name="Moussallem E."/>
            <person name="Lamperti C."/>
            <person name="Donati M.A."/>
            <person name="Smith J.D."/>
            <person name="McLaughlin H.M."/>
            <person name="Eng C.M."/>
            <person name="Walkiewicz M."/>
            <person name="Xia F."/>
            <person name="Pippucci T."/>
            <person name="Magini P."/>
            <person name="Seri M."/>
            <person name="Zeviani M."/>
            <person name="Hirano M."/>
            <person name="Hunter J.V."/>
            <person name="Srour M."/>
            <person name="Zanigni S."/>
            <person name="Lewis R.A."/>
            <person name="Muzny D.M."/>
            <person name="Lotze T.E."/>
            <person name="Boerwinkle E."/>
            <person name="Gibbs R.A."/>
            <person name="Hickey S.E."/>
            <person name="Graham B.H."/>
            <person name="Yang Y."/>
            <person name="Buhas D."/>
            <person name="Martin D.M."/>
            <person name="Potocki L."/>
            <person name="Graziano C."/>
            <person name="Bellen H.J."/>
            <person name="Lupski J.R."/>
        </authorList>
    </citation>
    <scope>FUNCTION</scope>
    <scope>MUTAGENESIS OF ARG-534</scope>
</reference>
<protein>
    <recommendedName>
        <fullName evidence="1">ATPase family AAA domain-containing protein 3A homolog</fullName>
    </recommendedName>
    <alternativeName>
        <fullName evidence="5">Belphegor protein</fullName>
    </alternativeName>
</protein>
<keyword id="KW-0067">ATP-binding</keyword>
<keyword id="KW-0175">Coiled coil</keyword>
<keyword id="KW-0472">Membrane</keyword>
<keyword id="KW-0496">Mitochondrion</keyword>
<keyword id="KW-0999">Mitochondrion inner membrane</keyword>
<keyword id="KW-1135">Mitochondrion nucleoid</keyword>
<keyword id="KW-0547">Nucleotide-binding</keyword>
<keyword id="KW-1185">Reference proteome</keyword>
<sequence length="604" mass="68361">MSWLLGRNRQQPQPDQTAGFSEGGGAADPEGRTAGEKSGDSQLSRAERKAMEAYRFDSSALERAADAAKTLERSKHAREALELSKMQEATRQTEYNTKVKEYEAHIEQAKVEQKRIDHEERRKTLIEETKQQQQRAQYQDQLSRKRYEDQLLQQQRVQEENLRKQEESVQRQEAMRRQTIEHEIEMKEKNRLKLLEHELRAKARVDRENRDINLEKIRLKAQEHRTTVLEGIKTAGTVIGAGAEAMLTDWDKVLTAAGGLSLLALGVYTAKGATGVVSRYVEARIGKPTLVGETSRFAFLDALKNPLHYLKRLRAKPTDALQGVVLNPKLEERLRDIAIATKNTRINKGMYRNVLMHGPPGTGKTMFAKKLAEHSGMDFAIMTGGDVAPMGKEGVTAIHKVFDWSHTSRRGLLLFVDEADAFLRKRSSEKISEDLRAALNAFLYRTSEQNPKFMLVLASNTPEQFDYAINDRLDEMVEFTLPGLEERERLLRLYFDKYVLQPAAAGAKRFKLDTFDYGKTCSKMAALCEGMSGREISKLGVSWQAAVYASEDGLLTEKMVLDRCYSAAQQHKQKMAWLSDQERADHKSITGTAAPPLTLTAKKL</sequence>
<proteinExistence type="evidence at protein level"/>
<name>ATD3A_DROME</name>
<accession>Q9VEX6</accession>
<evidence type="ECO:0000250" key="1">
    <source>
        <dbReference type="UniProtKB" id="Q9NVI7"/>
    </source>
</evidence>
<evidence type="ECO:0000255" key="2"/>
<evidence type="ECO:0000256" key="3">
    <source>
        <dbReference type="SAM" id="MobiDB-lite"/>
    </source>
</evidence>
<evidence type="ECO:0000269" key="4">
    <source>
    </source>
</evidence>
<evidence type="ECO:0000303" key="5">
    <source ref="3"/>
</evidence>
<evidence type="ECO:0000312" key="6">
    <source>
        <dbReference type="FlyBase" id="FBgn0287225"/>
    </source>
</evidence>
<comment type="function">
    <text evidence="4">Required to maintain the proper number of mitochondria in neurons and muscles.</text>
</comment>
<comment type="subunit">
    <text evidence="1">Can form homooligomers.</text>
</comment>
<comment type="subcellular location">
    <subcellularLocation>
        <location evidence="1">Mitochondrion inner membrane</location>
    </subcellularLocation>
    <subcellularLocation>
        <location evidence="1">Mitochondrion matrix</location>
        <location evidence="1">Mitochondrion nucleoid</location>
    </subcellularLocation>
</comment>
<dbReference type="EMBL" id="AF227210">
    <property type="protein sequence ID" value="AAF43016.1"/>
    <property type="molecule type" value="Genomic_DNA"/>
</dbReference>
<dbReference type="EMBL" id="AE014297">
    <property type="protein sequence ID" value="AAF55289.2"/>
    <property type="molecule type" value="Genomic_DNA"/>
</dbReference>
<dbReference type="EMBL" id="AE014297">
    <property type="protein sequence ID" value="AFH06453.1"/>
    <property type="molecule type" value="Genomic_DNA"/>
</dbReference>
<dbReference type="EMBL" id="AF227209">
    <property type="protein sequence ID" value="AAF43014.1"/>
    <property type="molecule type" value="mRNA"/>
</dbReference>
<dbReference type="RefSeq" id="NP_001247135.1">
    <property type="nucleotide sequence ID" value="NM_001260206.1"/>
</dbReference>
<dbReference type="RefSeq" id="NP_524996.1">
    <property type="nucleotide sequence ID" value="NM_080257.4"/>
</dbReference>
<dbReference type="SMR" id="Q9VEX6"/>
<dbReference type="FunCoup" id="Q9VEX6">
    <property type="interactions" value="1733"/>
</dbReference>
<dbReference type="IntAct" id="Q9VEX6">
    <property type="interactions" value="49"/>
</dbReference>
<dbReference type="MINT" id="Q9VEX6"/>
<dbReference type="STRING" id="7227.FBpp0082728"/>
<dbReference type="PaxDb" id="7227-FBpp0297140"/>
<dbReference type="EnsemblMetazoa" id="FBtr0083276">
    <property type="protein sequence ID" value="FBpp0082728"/>
    <property type="gene ID" value="FBgn0287225"/>
</dbReference>
<dbReference type="EnsemblMetazoa" id="FBtr0305998">
    <property type="protein sequence ID" value="FBpp0297140"/>
    <property type="gene ID" value="FBgn0287225"/>
</dbReference>
<dbReference type="GeneID" id="53565"/>
<dbReference type="KEGG" id="dme:Dmel_CG6815"/>
<dbReference type="UCSC" id="CG6815-RA">
    <property type="organism name" value="d. melanogaster"/>
</dbReference>
<dbReference type="AGR" id="FB:FBgn0287225"/>
<dbReference type="CTD" id="53565"/>
<dbReference type="FlyBase" id="FBgn0287225">
    <property type="gene designation" value="bor"/>
</dbReference>
<dbReference type="VEuPathDB" id="VectorBase:FBgn0287225"/>
<dbReference type="eggNOG" id="KOG0742">
    <property type="taxonomic scope" value="Eukaryota"/>
</dbReference>
<dbReference type="GeneTree" id="ENSGT00730000111059"/>
<dbReference type="HOGENOM" id="CLU_011488_2_0_1"/>
<dbReference type="InParanoid" id="Q9VEX6"/>
<dbReference type="OMA" id="HKSITGG"/>
<dbReference type="OrthoDB" id="199596at2759"/>
<dbReference type="PhylomeDB" id="Q9VEX6"/>
<dbReference type="Reactome" id="R-DME-6798695">
    <property type="pathway name" value="Neutrophil degranulation"/>
</dbReference>
<dbReference type="SignaLink" id="Q9VEX6"/>
<dbReference type="BioGRID-ORCS" id="53565">
    <property type="hits" value="1 hit in 3 CRISPR screens"/>
</dbReference>
<dbReference type="GenomeRNAi" id="53565"/>
<dbReference type="PRO" id="PR:Q9VEX6"/>
<dbReference type="Proteomes" id="UP000000803">
    <property type="component" value="Chromosome 3R"/>
</dbReference>
<dbReference type="ExpressionAtlas" id="Q9VEX6">
    <property type="expression patterns" value="baseline and differential"/>
</dbReference>
<dbReference type="GO" id="GO:0005743">
    <property type="term" value="C:mitochondrial inner membrane"/>
    <property type="evidence" value="ECO:0000250"/>
    <property type="project" value="FlyBase"/>
</dbReference>
<dbReference type="GO" id="GO:0042645">
    <property type="term" value="C:mitochondrial nucleoid"/>
    <property type="evidence" value="ECO:0007669"/>
    <property type="project" value="UniProtKB-SubCell"/>
</dbReference>
<dbReference type="GO" id="GO:0005739">
    <property type="term" value="C:mitochondrion"/>
    <property type="evidence" value="ECO:0007005"/>
    <property type="project" value="FlyBase"/>
</dbReference>
<dbReference type="GO" id="GO:0005524">
    <property type="term" value="F:ATP binding"/>
    <property type="evidence" value="ECO:0007669"/>
    <property type="project" value="UniProtKB-KW"/>
</dbReference>
<dbReference type="GO" id="GO:0016887">
    <property type="term" value="F:ATP hydrolysis activity"/>
    <property type="evidence" value="ECO:0000255"/>
    <property type="project" value="FlyBase"/>
</dbReference>
<dbReference type="GO" id="GO:0007005">
    <property type="term" value="P:mitochondrion organization"/>
    <property type="evidence" value="ECO:0000315"/>
    <property type="project" value="UniProtKB"/>
</dbReference>
<dbReference type="CDD" id="cd19512">
    <property type="entry name" value="RecA-like_ATAD3-like"/>
    <property type="match status" value="1"/>
</dbReference>
<dbReference type="FunFam" id="3.40.50.300:FF:000470">
    <property type="entry name" value="ATPase family, AAA domain containing 3A"/>
    <property type="match status" value="1"/>
</dbReference>
<dbReference type="Gene3D" id="3.40.50.300">
    <property type="entry name" value="P-loop containing nucleotide triphosphate hydrolases"/>
    <property type="match status" value="1"/>
</dbReference>
<dbReference type="InterPro" id="IPR003593">
    <property type="entry name" value="AAA+_ATPase"/>
</dbReference>
<dbReference type="InterPro" id="IPR021911">
    <property type="entry name" value="ATAD3_N"/>
</dbReference>
<dbReference type="InterPro" id="IPR003959">
    <property type="entry name" value="ATPase_AAA_core"/>
</dbReference>
<dbReference type="InterPro" id="IPR027417">
    <property type="entry name" value="P-loop_NTPase"/>
</dbReference>
<dbReference type="PANTHER" id="PTHR23075:SF0">
    <property type="entry name" value="ATPASE FAMILY AAA DOMAIN-CONTAINING PROTEIN 3"/>
    <property type="match status" value="1"/>
</dbReference>
<dbReference type="PANTHER" id="PTHR23075">
    <property type="entry name" value="PUTATIVE ATP-ASE"/>
    <property type="match status" value="1"/>
</dbReference>
<dbReference type="Pfam" id="PF00004">
    <property type="entry name" value="AAA"/>
    <property type="match status" value="1"/>
</dbReference>
<dbReference type="Pfam" id="PF12037">
    <property type="entry name" value="ATAD3_N"/>
    <property type="match status" value="1"/>
</dbReference>
<dbReference type="SMART" id="SM00382">
    <property type="entry name" value="AAA"/>
    <property type="match status" value="1"/>
</dbReference>
<dbReference type="SUPFAM" id="SSF52540">
    <property type="entry name" value="P-loop containing nucleoside triphosphate hydrolases"/>
    <property type="match status" value="1"/>
</dbReference>
<organism>
    <name type="scientific">Drosophila melanogaster</name>
    <name type="common">Fruit fly</name>
    <dbReference type="NCBI Taxonomy" id="7227"/>
    <lineage>
        <taxon>Eukaryota</taxon>
        <taxon>Metazoa</taxon>
        <taxon>Ecdysozoa</taxon>
        <taxon>Arthropoda</taxon>
        <taxon>Hexapoda</taxon>
        <taxon>Insecta</taxon>
        <taxon>Pterygota</taxon>
        <taxon>Neoptera</taxon>
        <taxon>Endopterygota</taxon>
        <taxon>Diptera</taxon>
        <taxon>Brachycera</taxon>
        <taxon>Muscomorpha</taxon>
        <taxon>Ephydroidea</taxon>
        <taxon>Drosophilidae</taxon>
        <taxon>Drosophila</taxon>
        <taxon>Sophophora</taxon>
    </lineage>
</organism>
<gene>
    <name evidence="5 6" type="primary">bor</name>
    <name type="ORF">CG6815</name>
    <name type="ORF">Dmel_CG6815</name>
</gene>